<evidence type="ECO:0000255" key="1">
    <source>
        <dbReference type="HAMAP-Rule" id="MF_00082"/>
    </source>
</evidence>
<evidence type="ECO:0000269" key="2">
    <source>
    </source>
</evidence>
<evidence type="ECO:0000269" key="3">
    <source>
    </source>
</evidence>
<evidence type="ECO:0007744" key="4">
    <source>
        <dbReference type="PDB" id="2BTY"/>
    </source>
</evidence>
<evidence type="ECO:0007829" key="5">
    <source>
        <dbReference type="PDB" id="2BTY"/>
    </source>
</evidence>
<organism>
    <name type="scientific">Thermotoga maritima (strain ATCC 43589 / DSM 3109 / JCM 10099 / NBRC 100826 / MSB8)</name>
    <dbReference type="NCBI Taxonomy" id="243274"/>
    <lineage>
        <taxon>Bacteria</taxon>
        <taxon>Thermotogati</taxon>
        <taxon>Thermotogota</taxon>
        <taxon>Thermotogae</taxon>
        <taxon>Thermotogales</taxon>
        <taxon>Thermotogaceae</taxon>
        <taxon>Thermotoga</taxon>
    </lineage>
</organism>
<sequence>MRIDTVNVLLEALPYIKEFYGKTFVIKFGGSAMKQENAKKAFIQDIILLKYTGIKPIIVHGGGPAISQMMKDLGIEPVFKNGHRVTDEKTMEIVEMVLVGKINKEIVMNLNLHGGRAVGICGKDSKLIVAEKETKHGDIGYVGKVKKVNPEILHALIENDYIPVIAPVGIGEDGHSYNINADTAAAEIAKSLMAEKLILLTDVDGVLKDGKLISTLTPDEAEELIRDGTVTGGMIPKVECAVSAVRGGVGAVHIINGGLEHAILLEIFSRKGIGTMIKELEG</sequence>
<comment type="function">
    <text evidence="1 2">Catalyzes the ATP-dependent phosphorylation of N-acetyl-L-glutamate.</text>
</comment>
<comment type="catalytic activity">
    <reaction evidence="1 2">
        <text>N-acetyl-L-glutamate + ATP = N-acetyl-L-glutamyl 5-phosphate + ADP</text>
        <dbReference type="Rhea" id="RHEA:14629"/>
        <dbReference type="ChEBI" id="CHEBI:30616"/>
        <dbReference type="ChEBI" id="CHEBI:44337"/>
        <dbReference type="ChEBI" id="CHEBI:57936"/>
        <dbReference type="ChEBI" id="CHEBI:456216"/>
        <dbReference type="EC" id="2.7.2.8"/>
    </reaction>
</comment>
<comment type="activity regulation">
    <text evidence="3">Allosterically inhibited by arginine.</text>
</comment>
<comment type="biophysicochemical properties">
    <temperatureDependence>
        <text evidence="2">Active from 25 to 80 degrees Celsius.</text>
    </temperatureDependence>
</comment>
<comment type="pathway">
    <text evidence="1 2">Amino-acid biosynthesis; L-arginine biosynthesis; N(2)-acetyl-L-ornithine from L-glutamate: step 2/4.</text>
</comment>
<comment type="subunit">
    <text evidence="3">Homohexamer.</text>
</comment>
<comment type="subcellular location">
    <subcellularLocation>
        <location evidence="1">Cytoplasm</location>
    </subcellularLocation>
</comment>
<comment type="mass spectrometry"/>
<comment type="mass spectrometry"/>
<comment type="similarity">
    <text evidence="1">Belongs to the acetylglutamate kinase family. ArgB subfamily.</text>
</comment>
<name>ARGB_THEMA</name>
<dbReference type="EC" id="2.7.2.8" evidence="1 2"/>
<dbReference type="EMBL" id="AE000512">
    <property type="protein sequence ID" value="AAD36847.1"/>
    <property type="molecule type" value="Genomic_DNA"/>
</dbReference>
<dbReference type="PIR" id="C72211">
    <property type="entry name" value="C72211"/>
</dbReference>
<dbReference type="RefSeq" id="NP_229581.1">
    <property type="nucleotide sequence ID" value="NC_000853.1"/>
</dbReference>
<dbReference type="RefSeq" id="WP_004082330.1">
    <property type="nucleotide sequence ID" value="NZ_CP011107.1"/>
</dbReference>
<dbReference type="PDB" id="2BTY">
    <property type="method" value="X-ray"/>
    <property type="resolution" value="2.75 A"/>
    <property type="chains" value="A/B/C=1-282"/>
</dbReference>
<dbReference type="PDBsum" id="2BTY"/>
<dbReference type="SMR" id="Q9X2A4"/>
<dbReference type="FunCoup" id="Q9X2A4">
    <property type="interactions" value="393"/>
</dbReference>
<dbReference type="STRING" id="243274.TM_1784"/>
<dbReference type="PaxDb" id="243274-THEMA_05280"/>
<dbReference type="EnsemblBacteria" id="AAD36847">
    <property type="protein sequence ID" value="AAD36847"/>
    <property type="gene ID" value="TM_1784"/>
</dbReference>
<dbReference type="KEGG" id="tma:TM1784"/>
<dbReference type="KEGG" id="tmi:THEMA_05280"/>
<dbReference type="KEGG" id="tmm:Tmari_1793"/>
<dbReference type="KEGG" id="tmw:THMA_1828"/>
<dbReference type="eggNOG" id="COG0548">
    <property type="taxonomic scope" value="Bacteria"/>
</dbReference>
<dbReference type="InParanoid" id="Q9X2A4"/>
<dbReference type="OrthoDB" id="9803155at2"/>
<dbReference type="BRENDA" id="2.7.2.8">
    <property type="organism ID" value="6331"/>
</dbReference>
<dbReference type="UniPathway" id="UPA00068">
    <property type="reaction ID" value="UER00107"/>
</dbReference>
<dbReference type="EvolutionaryTrace" id="Q9X2A4"/>
<dbReference type="Proteomes" id="UP000008183">
    <property type="component" value="Chromosome"/>
</dbReference>
<dbReference type="GO" id="GO:0005737">
    <property type="term" value="C:cytoplasm"/>
    <property type="evidence" value="ECO:0007669"/>
    <property type="project" value="UniProtKB-SubCell"/>
</dbReference>
<dbReference type="GO" id="GO:0003991">
    <property type="term" value="F:acetylglutamate kinase activity"/>
    <property type="evidence" value="ECO:0000318"/>
    <property type="project" value="GO_Central"/>
</dbReference>
<dbReference type="GO" id="GO:0005524">
    <property type="term" value="F:ATP binding"/>
    <property type="evidence" value="ECO:0007669"/>
    <property type="project" value="UniProtKB-UniRule"/>
</dbReference>
<dbReference type="GO" id="GO:0042450">
    <property type="term" value="P:arginine biosynthetic process via ornithine"/>
    <property type="evidence" value="ECO:0007669"/>
    <property type="project" value="UniProtKB-UniRule"/>
</dbReference>
<dbReference type="GO" id="GO:0006526">
    <property type="term" value="P:L-arginine biosynthetic process"/>
    <property type="evidence" value="ECO:0000318"/>
    <property type="project" value="GO_Central"/>
</dbReference>
<dbReference type="CDD" id="cd04250">
    <property type="entry name" value="AAK_NAGK-C"/>
    <property type="match status" value="1"/>
</dbReference>
<dbReference type="FunFam" id="3.40.1160.10:FF:000004">
    <property type="entry name" value="Acetylglutamate kinase"/>
    <property type="match status" value="1"/>
</dbReference>
<dbReference type="Gene3D" id="3.40.1160.10">
    <property type="entry name" value="Acetylglutamate kinase-like"/>
    <property type="match status" value="1"/>
</dbReference>
<dbReference type="HAMAP" id="MF_00082">
    <property type="entry name" value="ArgB"/>
    <property type="match status" value="1"/>
</dbReference>
<dbReference type="InterPro" id="IPR036393">
    <property type="entry name" value="AceGlu_kinase-like_sf"/>
</dbReference>
<dbReference type="InterPro" id="IPR004662">
    <property type="entry name" value="AcgluKinase_fam"/>
</dbReference>
<dbReference type="InterPro" id="IPR037528">
    <property type="entry name" value="ArgB"/>
</dbReference>
<dbReference type="InterPro" id="IPR001048">
    <property type="entry name" value="Asp/Glu/Uridylate_kinase"/>
</dbReference>
<dbReference type="InterPro" id="IPR001057">
    <property type="entry name" value="Glu/AcGlu_kinase"/>
</dbReference>
<dbReference type="InterPro" id="IPR041727">
    <property type="entry name" value="NAGK-C"/>
</dbReference>
<dbReference type="NCBIfam" id="TIGR00761">
    <property type="entry name" value="argB"/>
    <property type="match status" value="1"/>
</dbReference>
<dbReference type="PANTHER" id="PTHR23342">
    <property type="entry name" value="N-ACETYLGLUTAMATE SYNTHASE"/>
    <property type="match status" value="1"/>
</dbReference>
<dbReference type="PANTHER" id="PTHR23342:SF0">
    <property type="entry name" value="N-ACETYLGLUTAMATE SYNTHASE, MITOCHONDRIAL"/>
    <property type="match status" value="1"/>
</dbReference>
<dbReference type="Pfam" id="PF00696">
    <property type="entry name" value="AA_kinase"/>
    <property type="match status" value="1"/>
</dbReference>
<dbReference type="PIRSF" id="PIRSF000728">
    <property type="entry name" value="NAGK"/>
    <property type="match status" value="1"/>
</dbReference>
<dbReference type="PRINTS" id="PR00474">
    <property type="entry name" value="GLU5KINASE"/>
</dbReference>
<dbReference type="SUPFAM" id="SSF53633">
    <property type="entry name" value="Carbamate kinase-like"/>
    <property type="match status" value="1"/>
</dbReference>
<gene>
    <name evidence="1" type="primary">argB</name>
    <name type="ordered locus">TM_1784</name>
</gene>
<accession>Q9X2A4</accession>
<reference key="1">
    <citation type="journal article" date="1999" name="Nature">
        <title>Evidence for lateral gene transfer between Archaea and Bacteria from genome sequence of Thermotoga maritima.</title>
        <authorList>
            <person name="Nelson K.E."/>
            <person name="Clayton R.A."/>
            <person name="Gill S.R."/>
            <person name="Gwinn M.L."/>
            <person name="Dodson R.J."/>
            <person name="Haft D.H."/>
            <person name="Hickey E.K."/>
            <person name="Peterson J.D."/>
            <person name="Nelson W.C."/>
            <person name="Ketchum K.A."/>
            <person name="McDonald L.A."/>
            <person name="Utterback T.R."/>
            <person name="Malek J.A."/>
            <person name="Linher K.D."/>
            <person name="Garrett M.M."/>
            <person name="Stewart A.M."/>
            <person name="Cotton M.D."/>
            <person name="Pratt M.S."/>
            <person name="Phillips C.A."/>
            <person name="Richardson D.L."/>
            <person name="Heidelberg J.F."/>
            <person name="Sutton G.G."/>
            <person name="Fleischmann R.D."/>
            <person name="Eisen J.A."/>
            <person name="White O."/>
            <person name="Salzberg S.L."/>
            <person name="Smith H.O."/>
            <person name="Venter J.C."/>
            <person name="Fraser C.M."/>
        </authorList>
    </citation>
    <scope>NUCLEOTIDE SEQUENCE [LARGE SCALE GENOMIC DNA]</scope>
    <source>
        <strain>ATCC 43589 / DSM 3109 / JCM 10099 / NBRC 100826 / MSB8</strain>
    </source>
</reference>
<reference key="2">
    <citation type="journal article" date="2004" name="J. Bacteriol.">
        <title>Arginine biosynthesis in Thermotoga maritima: characterization of the arginine-sensitive N-acetyl-L-glutamate kinase.</title>
        <authorList>
            <person name="Fernandez-Murga M.L."/>
            <person name="Gil-Ortiz F."/>
            <person name="Llacer J.L."/>
            <person name="Rubio V."/>
        </authorList>
    </citation>
    <scope>PROTEIN SEQUENCE OF 1-35</scope>
    <scope>FUNCTION</scope>
    <scope>CATALYTIC ACTIVITY</scope>
    <scope>BIOPHYSICOCHEMICAL PROPERTIES</scope>
    <scope>PATHWAY</scope>
    <scope>MASS SPECTROMETRY</scope>
</reference>
<reference key="3">
    <citation type="journal article" date="2006" name="J. Mol. Biol.">
        <title>Structural bases of feed-back control of arginine biosynthesis, revealed by the structures of two hexameric N-acetylglutamate kinases, from Thermotoga maritima and Pseudomonas aeruginosa.</title>
        <authorList>
            <person name="Ramon-Maiques S."/>
            <person name="Fernandez-Murga M.L."/>
            <person name="Gil-Ortiz F."/>
            <person name="Vagin A."/>
            <person name="Fita I."/>
            <person name="Rubio V."/>
        </authorList>
    </citation>
    <scope>X-RAY CRYSTALLOGRAPHY (2.75 ANGSTROMS) IN COMPLEX WITH SUBSTRATE AND ARGININE</scope>
    <scope>MASS SPECTROMETRY</scope>
    <scope>ACTIVITY REGULATION</scope>
    <scope>SUBUNIT</scope>
</reference>
<feature type="chain" id="PRO_0000112678" description="Acetylglutamate kinase">
    <location>
        <begin position="1"/>
        <end position="282"/>
    </location>
</feature>
<feature type="binding site" evidence="1">
    <location>
        <begin position="62"/>
        <end position="63"/>
    </location>
    <ligand>
        <name>substrate</name>
    </ligand>
</feature>
<feature type="binding site" evidence="1">
    <location>
        <position position="84"/>
    </location>
    <ligand>
        <name>substrate</name>
    </ligand>
</feature>
<feature type="binding site" evidence="1 3">
    <location>
        <position position="178"/>
    </location>
    <ligand>
        <name>substrate</name>
    </ligand>
</feature>
<feature type="binding site" evidence="3 4">
    <location>
        <position position="196"/>
    </location>
    <ligand>
        <name>L-arginine</name>
        <dbReference type="ChEBI" id="CHEBI:32682"/>
        <note>allosteric inhibitor</note>
    </ligand>
</feature>
<feature type="binding site" evidence="3 4">
    <location>
        <position position="214"/>
    </location>
    <ligand>
        <name>L-arginine</name>
        <dbReference type="ChEBI" id="CHEBI:32682"/>
        <note>allosteric inhibitor</note>
    </ligand>
</feature>
<feature type="binding site" evidence="3 4">
    <location>
        <begin position="266"/>
        <end position="269"/>
    </location>
    <ligand>
        <name>L-arginine</name>
        <dbReference type="ChEBI" id="CHEBI:32682"/>
        <note>allosteric inhibitor</note>
    </ligand>
</feature>
<feature type="site" description="Transition state stabilizer" evidence="1">
    <location>
        <position position="27"/>
    </location>
</feature>
<feature type="site" description="Transition state stabilizer" evidence="1">
    <location>
        <position position="237"/>
    </location>
</feature>
<feature type="helix" evidence="5">
    <location>
        <begin position="2"/>
        <end position="19"/>
    </location>
</feature>
<feature type="strand" evidence="5">
    <location>
        <begin position="23"/>
        <end position="28"/>
    </location>
</feature>
<feature type="helix" evidence="5">
    <location>
        <begin position="31"/>
        <end position="34"/>
    </location>
</feature>
<feature type="helix" evidence="5">
    <location>
        <begin position="36"/>
        <end position="51"/>
    </location>
</feature>
<feature type="strand" evidence="5">
    <location>
        <begin position="55"/>
        <end position="60"/>
    </location>
</feature>
<feature type="helix" evidence="5">
    <location>
        <begin position="64"/>
        <end position="72"/>
    </location>
</feature>
<feature type="strand" evidence="5">
    <location>
        <begin position="79"/>
        <end position="84"/>
    </location>
</feature>
<feature type="helix" evidence="5">
    <location>
        <begin position="88"/>
        <end position="100"/>
    </location>
</feature>
<feature type="helix" evidence="5">
    <location>
        <begin position="102"/>
        <end position="111"/>
    </location>
</feature>
<feature type="turn" evidence="5">
    <location>
        <begin position="112"/>
        <end position="114"/>
    </location>
</feature>
<feature type="strand" evidence="5">
    <location>
        <begin position="117"/>
        <end position="121"/>
    </location>
</feature>
<feature type="helix" evidence="5">
    <location>
        <begin position="124"/>
        <end position="126"/>
    </location>
</feature>
<feature type="strand" evidence="5">
    <location>
        <begin position="127"/>
        <end position="132"/>
    </location>
</feature>
<feature type="strand" evidence="5">
    <location>
        <begin position="140"/>
        <end position="148"/>
    </location>
</feature>
<feature type="helix" evidence="5">
    <location>
        <begin position="151"/>
        <end position="158"/>
    </location>
</feature>
<feature type="strand" evidence="5">
    <location>
        <begin position="162"/>
        <end position="170"/>
    </location>
</feature>
<feature type="strand" evidence="5">
    <location>
        <begin position="172"/>
        <end position="174"/>
    </location>
</feature>
<feature type="strand" evidence="5">
    <location>
        <begin position="176"/>
        <end position="178"/>
    </location>
</feature>
<feature type="helix" evidence="5">
    <location>
        <begin position="181"/>
        <end position="192"/>
    </location>
</feature>
<feature type="strand" evidence="5">
    <location>
        <begin position="195"/>
        <end position="205"/>
    </location>
</feature>
<feature type="helix" evidence="5">
    <location>
        <begin position="218"/>
        <end position="225"/>
    </location>
</feature>
<feature type="turn" evidence="5">
    <location>
        <begin position="226"/>
        <end position="228"/>
    </location>
</feature>
<feature type="helix" evidence="5">
    <location>
        <begin position="234"/>
        <end position="246"/>
    </location>
</feature>
<feature type="strand" evidence="5">
    <location>
        <begin position="252"/>
        <end position="256"/>
    </location>
</feature>
<feature type="helix" evidence="5">
    <location>
        <begin position="262"/>
        <end position="267"/>
    </location>
</feature>
<feature type="strand" evidence="5">
    <location>
        <begin position="268"/>
        <end position="271"/>
    </location>
</feature>
<feature type="strand" evidence="5">
    <location>
        <begin position="273"/>
        <end position="277"/>
    </location>
</feature>
<proteinExistence type="evidence at protein level"/>
<protein>
    <recommendedName>
        <fullName evidence="1">Acetylglutamate kinase</fullName>
        <ecNumber evidence="1 2">2.7.2.8</ecNumber>
    </recommendedName>
    <alternativeName>
        <fullName evidence="1">N-acetyl-L-glutamate 5-phosphotransferase</fullName>
    </alternativeName>
    <alternativeName>
        <fullName evidence="1">NAG kinase</fullName>
        <shortName evidence="1">NAGK</shortName>
    </alternativeName>
</protein>
<keyword id="KW-0002">3D-structure</keyword>
<keyword id="KW-0021">Allosteric enzyme</keyword>
<keyword id="KW-0028">Amino-acid biosynthesis</keyword>
<keyword id="KW-0055">Arginine biosynthesis</keyword>
<keyword id="KW-0067">ATP-binding</keyword>
<keyword id="KW-0963">Cytoplasm</keyword>
<keyword id="KW-0903">Direct protein sequencing</keyword>
<keyword id="KW-0418">Kinase</keyword>
<keyword id="KW-0547">Nucleotide-binding</keyword>
<keyword id="KW-1185">Reference proteome</keyword>
<keyword id="KW-0808">Transferase</keyword>